<protein>
    <recommendedName>
        <fullName evidence="1">Holliday junction branch migration complex subunit RuvA</fullName>
    </recommendedName>
</protein>
<proteinExistence type="inferred from homology"/>
<keyword id="KW-0963">Cytoplasm</keyword>
<keyword id="KW-0227">DNA damage</keyword>
<keyword id="KW-0233">DNA recombination</keyword>
<keyword id="KW-0234">DNA repair</keyword>
<keyword id="KW-0238">DNA-binding</keyword>
<reference key="1">
    <citation type="submission" date="2009-01" db="EMBL/GenBank/DDBJ databases">
        <title>Complete sequence of chromosome of Arthrobacter chlorophenolicus A6.</title>
        <authorList>
            <consortium name="US DOE Joint Genome Institute"/>
            <person name="Lucas S."/>
            <person name="Copeland A."/>
            <person name="Lapidus A."/>
            <person name="Glavina del Rio T."/>
            <person name="Tice H."/>
            <person name="Bruce D."/>
            <person name="Goodwin L."/>
            <person name="Pitluck S."/>
            <person name="Goltsman E."/>
            <person name="Clum A."/>
            <person name="Larimer F."/>
            <person name="Land M."/>
            <person name="Hauser L."/>
            <person name="Kyrpides N."/>
            <person name="Mikhailova N."/>
            <person name="Jansson J."/>
            <person name="Richardson P."/>
        </authorList>
    </citation>
    <scope>NUCLEOTIDE SEQUENCE [LARGE SCALE GENOMIC DNA]</scope>
    <source>
        <strain>ATCC 700700 / DSM 12829 / CIP 107037 / JCM 12360 / KCTC 9906 / NCIMB 13794 / A6</strain>
    </source>
</reference>
<organism>
    <name type="scientific">Pseudarthrobacter chlorophenolicus (strain ATCC 700700 / DSM 12829 / CIP 107037 / JCM 12360 / KCTC 9906 / NCIMB 13794 / A6)</name>
    <name type="common">Arthrobacter chlorophenolicus</name>
    <dbReference type="NCBI Taxonomy" id="452863"/>
    <lineage>
        <taxon>Bacteria</taxon>
        <taxon>Bacillati</taxon>
        <taxon>Actinomycetota</taxon>
        <taxon>Actinomycetes</taxon>
        <taxon>Micrococcales</taxon>
        <taxon>Micrococcaceae</taxon>
        <taxon>Pseudarthrobacter</taxon>
    </lineage>
</organism>
<dbReference type="EMBL" id="CP001341">
    <property type="protein sequence ID" value="ACL40006.1"/>
    <property type="molecule type" value="Genomic_DNA"/>
</dbReference>
<dbReference type="RefSeq" id="WP_015937224.1">
    <property type="nucleotide sequence ID" value="NC_011886.1"/>
</dbReference>
<dbReference type="SMR" id="B8H9D7"/>
<dbReference type="STRING" id="452863.Achl_2032"/>
<dbReference type="KEGG" id="ach:Achl_2032"/>
<dbReference type="eggNOG" id="COG0632">
    <property type="taxonomic scope" value="Bacteria"/>
</dbReference>
<dbReference type="HOGENOM" id="CLU_087936_2_1_11"/>
<dbReference type="OrthoDB" id="5293449at2"/>
<dbReference type="Proteomes" id="UP000002505">
    <property type="component" value="Chromosome"/>
</dbReference>
<dbReference type="GO" id="GO:0005737">
    <property type="term" value="C:cytoplasm"/>
    <property type="evidence" value="ECO:0007669"/>
    <property type="project" value="UniProtKB-SubCell"/>
</dbReference>
<dbReference type="GO" id="GO:0009379">
    <property type="term" value="C:Holliday junction helicase complex"/>
    <property type="evidence" value="ECO:0007669"/>
    <property type="project" value="InterPro"/>
</dbReference>
<dbReference type="GO" id="GO:0048476">
    <property type="term" value="C:Holliday junction resolvase complex"/>
    <property type="evidence" value="ECO:0007669"/>
    <property type="project" value="UniProtKB-UniRule"/>
</dbReference>
<dbReference type="GO" id="GO:0005524">
    <property type="term" value="F:ATP binding"/>
    <property type="evidence" value="ECO:0007669"/>
    <property type="project" value="InterPro"/>
</dbReference>
<dbReference type="GO" id="GO:0000400">
    <property type="term" value="F:four-way junction DNA binding"/>
    <property type="evidence" value="ECO:0007669"/>
    <property type="project" value="UniProtKB-UniRule"/>
</dbReference>
<dbReference type="GO" id="GO:0009378">
    <property type="term" value="F:four-way junction helicase activity"/>
    <property type="evidence" value="ECO:0007669"/>
    <property type="project" value="InterPro"/>
</dbReference>
<dbReference type="GO" id="GO:0006310">
    <property type="term" value="P:DNA recombination"/>
    <property type="evidence" value="ECO:0007669"/>
    <property type="project" value="UniProtKB-UniRule"/>
</dbReference>
<dbReference type="GO" id="GO:0006281">
    <property type="term" value="P:DNA repair"/>
    <property type="evidence" value="ECO:0007669"/>
    <property type="project" value="UniProtKB-UniRule"/>
</dbReference>
<dbReference type="CDD" id="cd14332">
    <property type="entry name" value="UBA_RuvA_C"/>
    <property type="match status" value="1"/>
</dbReference>
<dbReference type="Gene3D" id="1.10.150.20">
    <property type="entry name" value="5' to 3' exonuclease, C-terminal subdomain"/>
    <property type="match status" value="1"/>
</dbReference>
<dbReference type="Gene3D" id="1.10.8.10">
    <property type="entry name" value="DNA helicase RuvA subunit, C-terminal domain"/>
    <property type="match status" value="1"/>
</dbReference>
<dbReference type="Gene3D" id="2.40.50.140">
    <property type="entry name" value="Nucleic acid-binding proteins"/>
    <property type="match status" value="1"/>
</dbReference>
<dbReference type="HAMAP" id="MF_00031">
    <property type="entry name" value="DNA_HJ_migration_RuvA"/>
    <property type="match status" value="1"/>
</dbReference>
<dbReference type="InterPro" id="IPR013849">
    <property type="entry name" value="DNA_helicase_Holl-junc_RuvA_I"/>
</dbReference>
<dbReference type="InterPro" id="IPR003583">
    <property type="entry name" value="Hlx-hairpin-Hlx_DNA-bd_motif"/>
</dbReference>
<dbReference type="InterPro" id="IPR012340">
    <property type="entry name" value="NA-bd_OB-fold"/>
</dbReference>
<dbReference type="InterPro" id="IPR000085">
    <property type="entry name" value="RuvA"/>
</dbReference>
<dbReference type="InterPro" id="IPR010994">
    <property type="entry name" value="RuvA_2-like"/>
</dbReference>
<dbReference type="InterPro" id="IPR011114">
    <property type="entry name" value="RuvA_C"/>
</dbReference>
<dbReference type="InterPro" id="IPR036267">
    <property type="entry name" value="RuvA_C_sf"/>
</dbReference>
<dbReference type="NCBIfam" id="TIGR00084">
    <property type="entry name" value="ruvA"/>
    <property type="match status" value="1"/>
</dbReference>
<dbReference type="Pfam" id="PF14520">
    <property type="entry name" value="HHH_5"/>
    <property type="match status" value="1"/>
</dbReference>
<dbReference type="Pfam" id="PF07499">
    <property type="entry name" value="RuvA_C"/>
    <property type="match status" value="1"/>
</dbReference>
<dbReference type="Pfam" id="PF01330">
    <property type="entry name" value="RuvA_N"/>
    <property type="match status" value="1"/>
</dbReference>
<dbReference type="SMART" id="SM00278">
    <property type="entry name" value="HhH1"/>
    <property type="match status" value="2"/>
</dbReference>
<dbReference type="SUPFAM" id="SSF46929">
    <property type="entry name" value="DNA helicase RuvA subunit, C-terminal domain"/>
    <property type="match status" value="1"/>
</dbReference>
<dbReference type="SUPFAM" id="SSF50249">
    <property type="entry name" value="Nucleic acid-binding proteins"/>
    <property type="match status" value="1"/>
</dbReference>
<dbReference type="SUPFAM" id="SSF47781">
    <property type="entry name" value="RuvA domain 2-like"/>
    <property type="match status" value="1"/>
</dbReference>
<sequence length="213" mass="22309">MISFLRGTVAHVGLSTAVIDLNGAGMSVYATPQTLSRLHVGEEGKVFTSLIVREDSMTLFGFADDDEREVFEVLLSVSGVGPRLALAVLAVHDPEAIRVAAHTGDNKTFTKVPGIGPKVAGRIVLELAGKLVPHGTAPAAATTAAEASWKPQVVAAMTSLGWSEKDASASIDKALADEPEVSFRGNVPEILRTTLRWLGQDGARAGNRVGSRG</sequence>
<accession>B8H9D7</accession>
<gene>
    <name evidence="1" type="primary">ruvA</name>
    <name type="ordered locus">Achl_2032</name>
</gene>
<comment type="function">
    <text evidence="1">The RuvA-RuvB-RuvC complex processes Holliday junction (HJ) DNA during genetic recombination and DNA repair, while the RuvA-RuvB complex plays an important role in the rescue of blocked DNA replication forks via replication fork reversal (RFR). RuvA specifically binds to HJ cruciform DNA, conferring on it an open structure. The RuvB hexamer acts as an ATP-dependent pump, pulling dsDNA into and through the RuvAB complex. HJ branch migration allows RuvC to scan DNA until it finds its consensus sequence, where it cleaves and resolves the cruciform DNA.</text>
</comment>
<comment type="subunit">
    <text evidence="1">Homotetramer. Forms an RuvA(8)-RuvB(12)-Holliday junction (HJ) complex. HJ DNA is sandwiched between 2 RuvA tetramers; dsDNA enters through RuvA and exits via RuvB. An RuvB hexamer assembles on each DNA strand where it exits the tetramer. Each RuvB hexamer is contacted by two RuvA subunits (via domain III) on 2 adjacent RuvB subunits; this complex drives branch migration. In the full resolvosome a probable DNA-RuvA(4)-RuvB(12)-RuvC(2) complex forms which resolves the HJ.</text>
</comment>
<comment type="subcellular location">
    <subcellularLocation>
        <location evidence="1">Cytoplasm</location>
    </subcellularLocation>
</comment>
<comment type="domain">
    <text evidence="1">Has three domains with a flexible linker between the domains II and III and assumes an 'L' shape. Domain III is highly mobile and contacts RuvB.</text>
</comment>
<comment type="similarity">
    <text evidence="1">Belongs to the RuvA family.</text>
</comment>
<feature type="chain" id="PRO_1000195112" description="Holliday junction branch migration complex subunit RuvA">
    <location>
        <begin position="1"/>
        <end position="213"/>
    </location>
</feature>
<feature type="region of interest" description="Domain I" evidence="1">
    <location>
        <begin position="1"/>
        <end position="63"/>
    </location>
</feature>
<feature type="region of interest" description="Domain II" evidence="1">
    <location>
        <begin position="64"/>
        <end position="140"/>
    </location>
</feature>
<feature type="region of interest" description="Flexible linker" evidence="1">
    <location>
        <begin position="140"/>
        <end position="144"/>
    </location>
</feature>
<feature type="region of interest" description="Domain III" evidence="1">
    <location>
        <begin position="145"/>
        <end position="213"/>
    </location>
</feature>
<name>RUVA_PSECP</name>
<evidence type="ECO:0000255" key="1">
    <source>
        <dbReference type="HAMAP-Rule" id="MF_00031"/>
    </source>
</evidence>